<organism>
    <name type="scientific">Bacillus subtilis (strain 168)</name>
    <dbReference type="NCBI Taxonomy" id="224308"/>
    <lineage>
        <taxon>Bacteria</taxon>
        <taxon>Bacillati</taxon>
        <taxon>Bacillota</taxon>
        <taxon>Bacilli</taxon>
        <taxon>Bacillales</taxon>
        <taxon>Bacillaceae</taxon>
        <taxon>Bacillus</taxon>
    </lineage>
</organism>
<gene>
    <name type="primary">ohrA</name>
    <name type="synonym">yklA</name>
    <name type="ordered locus">BSU13140</name>
</gene>
<keyword id="KW-1185">Reference proteome</keyword>
<reference key="1">
    <citation type="submission" date="1997-11" db="EMBL/GenBank/DDBJ databases">
        <title>Sequence of the Bacillus subtilis genome between xlyA and ykoR.</title>
        <authorList>
            <person name="Devine K.M."/>
        </authorList>
    </citation>
    <scope>NUCLEOTIDE SEQUENCE [GENOMIC DNA]</scope>
    <source>
        <strain>168</strain>
    </source>
</reference>
<reference key="2">
    <citation type="journal article" date="1997" name="Nature">
        <title>The complete genome sequence of the Gram-positive bacterium Bacillus subtilis.</title>
        <authorList>
            <person name="Kunst F."/>
            <person name="Ogasawara N."/>
            <person name="Moszer I."/>
            <person name="Albertini A.M."/>
            <person name="Alloni G."/>
            <person name="Azevedo V."/>
            <person name="Bertero M.G."/>
            <person name="Bessieres P."/>
            <person name="Bolotin A."/>
            <person name="Borchert S."/>
            <person name="Borriss R."/>
            <person name="Boursier L."/>
            <person name="Brans A."/>
            <person name="Braun M."/>
            <person name="Brignell S.C."/>
            <person name="Bron S."/>
            <person name="Brouillet S."/>
            <person name="Bruschi C.V."/>
            <person name="Caldwell B."/>
            <person name="Capuano V."/>
            <person name="Carter N.M."/>
            <person name="Choi S.-K."/>
            <person name="Codani J.-J."/>
            <person name="Connerton I.F."/>
            <person name="Cummings N.J."/>
            <person name="Daniel R.A."/>
            <person name="Denizot F."/>
            <person name="Devine K.M."/>
            <person name="Duesterhoeft A."/>
            <person name="Ehrlich S.D."/>
            <person name="Emmerson P.T."/>
            <person name="Entian K.-D."/>
            <person name="Errington J."/>
            <person name="Fabret C."/>
            <person name="Ferrari E."/>
            <person name="Foulger D."/>
            <person name="Fritz C."/>
            <person name="Fujita M."/>
            <person name="Fujita Y."/>
            <person name="Fuma S."/>
            <person name="Galizzi A."/>
            <person name="Galleron N."/>
            <person name="Ghim S.-Y."/>
            <person name="Glaser P."/>
            <person name="Goffeau A."/>
            <person name="Golightly E.J."/>
            <person name="Grandi G."/>
            <person name="Guiseppi G."/>
            <person name="Guy B.J."/>
            <person name="Haga K."/>
            <person name="Haiech J."/>
            <person name="Harwood C.R."/>
            <person name="Henaut A."/>
            <person name="Hilbert H."/>
            <person name="Holsappel S."/>
            <person name="Hosono S."/>
            <person name="Hullo M.-F."/>
            <person name="Itaya M."/>
            <person name="Jones L.-M."/>
            <person name="Joris B."/>
            <person name="Karamata D."/>
            <person name="Kasahara Y."/>
            <person name="Klaerr-Blanchard M."/>
            <person name="Klein C."/>
            <person name="Kobayashi Y."/>
            <person name="Koetter P."/>
            <person name="Koningstein G."/>
            <person name="Krogh S."/>
            <person name="Kumano M."/>
            <person name="Kurita K."/>
            <person name="Lapidus A."/>
            <person name="Lardinois S."/>
            <person name="Lauber J."/>
            <person name="Lazarevic V."/>
            <person name="Lee S.-M."/>
            <person name="Levine A."/>
            <person name="Liu H."/>
            <person name="Masuda S."/>
            <person name="Mauel C."/>
            <person name="Medigue C."/>
            <person name="Medina N."/>
            <person name="Mellado R.P."/>
            <person name="Mizuno M."/>
            <person name="Moestl D."/>
            <person name="Nakai S."/>
            <person name="Noback M."/>
            <person name="Noone D."/>
            <person name="O'Reilly M."/>
            <person name="Ogawa K."/>
            <person name="Ogiwara A."/>
            <person name="Oudega B."/>
            <person name="Park S.-H."/>
            <person name="Parro V."/>
            <person name="Pohl T.M."/>
            <person name="Portetelle D."/>
            <person name="Porwollik S."/>
            <person name="Prescott A.M."/>
            <person name="Presecan E."/>
            <person name="Pujic P."/>
            <person name="Purnelle B."/>
            <person name="Rapoport G."/>
            <person name="Rey M."/>
            <person name="Reynolds S."/>
            <person name="Rieger M."/>
            <person name="Rivolta C."/>
            <person name="Rocha E."/>
            <person name="Roche B."/>
            <person name="Rose M."/>
            <person name="Sadaie Y."/>
            <person name="Sato T."/>
            <person name="Scanlan E."/>
            <person name="Schleich S."/>
            <person name="Schroeter R."/>
            <person name="Scoffone F."/>
            <person name="Sekiguchi J."/>
            <person name="Sekowska A."/>
            <person name="Seror S.J."/>
            <person name="Serror P."/>
            <person name="Shin B.-S."/>
            <person name="Soldo B."/>
            <person name="Sorokin A."/>
            <person name="Tacconi E."/>
            <person name="Takagi T."/>
            <person name="Takahashi H."/>
            <person name="Takemaru K."/>
            <person name="Takeuchi M."/>
            <person name="Tamakoshi A."/>
            <person name="Tanaka T."/>
            <person name="Terpstra P."/>
            <person name="Tognoni A."/>
            <person name="Tosato V."/>
            <person name="Uchiyama S."/>
            <person name="Vandenbol M."/>
            <person name="Vannier F."/>
            <person name="Vassarotti A."/>
            <person name="Viari A."/>
            <person name="Wambutt R."/>
            <person name="Wedler E."/>
            <person name="Wedler H."/>
            <person name="Weitzenegger T."/>
            <person name="Winters P."/>
            <person name="Wipat A."/>
            <person name="Yamamoto H."/>
            <person name="Yamane K."/>
            <person name="Yasumoto K."/>
            <person name="Yata K."/>
            <person name="Yoshida K."/>
            <person name="Yoshikawa H.-F."/>
            <person name="Zumstein E."/>
            <person name="Yoshikawa H."/>
            <person name="Danchin A."/>
        </authorList>
    </citation>
    <scope>NUCLEOTIDE SEQUENCE [LARGE SCALE GENOMIC DNA]</scope>
    <source>
        <strain>168</strain>
    </source>
</reference>
<reference key="3">
    <citation type="journal article" date="2001" name="J. Bacteriol.">
        <title>OhrR is a repressor of ohrA, a key organic hydroperoxide resistance determinant in Bacillus subtilis.</title>
        <authorList>
            <person name="Fuangthong M."/>
            <person name="Atichartpongkul S."/>
            <person name="Mongkolsuk S."/>
            <person name="Helmann J.D."/>
        </authorList>
    </citation>
    <scope>FUNCTION</scope>
    <source>
        <strain>168</strain>
    </source>
</reference>
<evidence type="ECO:0000269" key="1">
    <source>
    </source>
</evidence>
<evidence type="ECO:0000305" key="2"/>
<dbReference type="EMBL" id="AJ002571">
    <property type="protein sequence ID" value="CAA05593.1"/>
    <property type="molecule type" value="Genomic_DNA"/>
</dbReference>
<dbReference type="EMBL" id="AL009126">
    <property type="protein sequence ID" value="CAB13171.1"/>
    <property type="molecule type" value="Genomic_DNA"/>
</dbReference>
<dbReference type="PIR" id="D69857">
    <property type="entry name" value="D69857"/>
</dbReference>
<dbReference type="RefSeq" id="NP_389197.1">
    <property type="nucleotide sequence ID" value="NC_000964.3"/>
</dbReference>
<dbReference type="RefSeq" id="WP_003232574.1">
    <property type="nucleotide sequence ID" value="NZ_OZ025638.1"/>
</dbReference>
<dbReference type="SMR" id="O34762"/>
<dbReference type="FunCoup" id="O34762">
    <property type="interactions" value="157"/>
</dbReference>
<dbReference type="STRING" id="224308.BSU13140"/>
<dbReference type="PaxDb" id="224308-BSU13140"/>
<dbReference type="DNASU" id="939848"/>
<dbReference type="EnsemblBacteria" id="CAB13171">
    <property type="protein sequence ID" value="CAB13171"/>
    <property type="gene ID" value="BSU_13140"/>
</dbReference>
<dbReference type="GeneID" id="939848"/>
<dbReference type="KEGG" id="bsu:BSU13140"/>
<dbReference type="PATRIC" id="fig|224308.179.peg.1426"/>
<dbReference type="eggNOG" id="COG1764">
    <property type="taxonomic scope" value="Bacteria"/>
</dbReference>
<dbReference type="InParanoid" id="O34762"/>
<dbReference type="OrthoDB" id="9797508at2"/>
<dbReference type="PhylomeDB" id="O34762"/>
<dbReference type="BioCyc" id="BSUB:BSU13140-MONOMER"/>
<dbReference type="Proteomes" id="UP000001570">
    <property type="component" value="Chromosome"/>
</dbReference>
<dbReference type="GO" id="GO:0006979">
    <property type="term" value="P:response to oxidative stress"/>
    <property type="evidence" value="ECO:0007669"/>
    <property type="project" value="InterPro"/>
</dbReference>
<dbReference type="Gene3D" id="2.20.25.10">
    <property type="match status" value="1"/>
</dbReference>
<dbReference type="Gene3D" id="3.30.300.20">
    <property type="match status" value="1"/>
</dbReference>
<dbReference type="InterPro" id="IPR015946">
    <property type="entry name" value="KH_dom-like_a/b"/>
</dbReference>
<dbReference type="InterPro" id="IPR019953">
    <property type="entry name" value="OHR"/>
</dbReference>
<dbReference type="InterPro" id="IPR003718">
    <property type="entry name" value="OsmC/Ohr_fam"/>
</dbReference>
<dbReference type="InterPro" id="IPR036102">
    <property type="entry name" value="OsmC/Ohrsf"/>
</dbReference>
<dbReference type="NCBIfam" id="TIGR03561">
    <property type="entry name" value="organ_hyd_perox"/>
    <property type="match status" value="1"/>
</dbReference>
<dbReference type="PANTHER" id="PTHR33797">
    <property type="entry name" value="ORGANIC HYDROPEROXIDE RESISTANCE PROTEIN-LIKE"/>
    <property type="match status" value="1"/>
</dbReference>
<dbReference type="PANTHER" id="PTHR33797:SF2">
    <property type="entry name" value="ORGANIC HYDROPEROXIDE RESISTANCE PROTEIN-LIKE"/>
    <property type="match status" value="1"/>
</dbReference>
<dbReference type="Pfam" id="PF02566">
    <property type="entry name" value="OsmC"/>
    <property type="match status" value="1"/>
</dbReference>
<dbReference type="SUPFAM" id="SSF82784">
    <property type="entry name" value="OsmC-like"/>
    <property type="match status" value="1"/>
</dbReference>
<accession>O34762</accession>
<sequence>MSQPLFTATVSAVGGREGKVISSDRVLELDVAMPGTPRAKKLEKATNPEQLFAAGYAACFDSALQLVARTERVKVETEVTANVSLLKDEADQGYKLGVTLQVKGEGVSASELEALVKKAHGVCPYSKATSGNIDVTLEVAE</sequence>
<protein>
    <recommendedName>
        <fullName>Organic hydroperoxide resistance protein OhrA</fullName>
    </recommendedName>
</protein>
<proteinExistence type="evidence at transcript level"/>
<name>OHRA_BACSU</name>
<feature type="chain" id="PRO_0000172727" description="Organic hydroperoxide resistance protein OhrA">
    <location>
        <begin position="1"/>
        <end position="141"/>
    </location>
</feature>
<comment type="function">
    <text evidence="1">Involved in organic hydroperoxide resistance.</text>
</comment>
<comment type="induction">
    <text>Strongly and specifically induced by organic peroxides. Repressed by OhrR.</text>
</comment>
<comment type="similarity">
    <text evidence="2">Belongs to the OsmC/Ohr family.</text>
</comment>